<proteinExistence type="inferred from homology"/>
<dbReference type="EMBL" id="AP009493">
    <property type="protein sequence ID" value="BAG18714.1"/>
    <property type="molecule type" value="Genomic_DNA"/>
</dbReference>
<dbReference type="RefSeq" id="WP_003965955.1">
    <property type="nucleotide sequence ID" value="NC_010572.1"/>
</dbReference>
<dbReference type="SMR" id="B1VYV9"/>
<dbReference type="KEGG" id="sgr:SGR_1885"/>
<dbReference type="eggNOG" id="COG0335">
    <property type="taxonomic scope" value="Bacteria"/>
</dbReference>
<dbReference type="HOGENOM" id="CLU_103507_2_1_11"/>
<dbReference type="Proteomes" id="UP000001685">
    <property type="component" value="Chromosome"/>
</dbReference>
<dbReference type="GO" id="GO:0022625">
    <property type="term" value="C:cytosolic large ribosomal subunit"/>
    <property type="evidence" value="ECO:0007669"/>
    <property type="project" value="TreeGrafter"/>
</dbReference>
<dbReference type="GO" id="GO:0003735">
    <property type="term" value="F:structural constituent of ribosome"/>
    <property type="evidence" value="ECO:0007669"/>
    <property type="project" value="InterPro"/>
</dbReference>
<dbReference type="GO" id="GO:0006412">
    <property type="term" value="P:translation"/>
    <property type="evidence" value="ECO:0007669"/>
    <property type="project" value="UniProtKB-UniRule"/>
</dbReference>
<dbReference type="FunFam" id="2.30.30.790:FF:000001">
    <property type="entry name" value="50S ribosomal protein L19"/>
    <property type="match status" value="1"/>
</dbReference>
<dbReference type="Gene3D" id="2.30.30.790">
    <property type="match status" value="1"/>
</dbReference>
<dbReference type="HAMAP" id="MF_00402">
    <property type="entry name" value="Ribosomal_bL19"/>
    <property type="match status" value="1"/>
</dbReference>
<dbReference type="InterPro" id="IPR001857">
    <property type="entry name" value="Ribosomal_bL19"/>
</dbReference>
<dbReference type="InterPro" id="IPR018257">
    <property type="entry name" value="Ribosomal_bL19_CS"/>
</dbReference>
<dbReference type="InterPro" id="IPR038657">
    <property type="entry name" value="Ribosomal_bL19_sf"/>
</dbReference>
<dbReference type="InterPro" id="IPR008991">
    <property type="entry name" value="Translation_prot_SH3-like_sf"/>
</dbReference>
<dbReference type="NCBIfam" id="TIGR01024">
    <property type="entry name" value="rplS_bact"/>
    <property type="match status" value="1"/>
</dbReference>
<dbReference type="PANTHER" id="PTHR15680:SF9">
    <property type="entry name" value="LARGE RIBOSOMAL SUBUNIT PROTEIN BL19M"/>
    <property type="match status" value="1"/>
</dbReference>
<dbReference type="PANTHER" id="PTHR15680">
    <property type="entry name" value="RIBOSOMAL PROTEIN L19"/>
    <property type="match status" value="1"/>
</dbReference>
<dbReference type="Pfam" id="PF01245">
    <property type="entry name" value="Ribosomal_L19"/>
    <property type="match status" value="1"/>
</dbReference>
<dbReference type="PIRSF" id="PIRSF002191">
    <property type="entry name" value="Ribosomal_L19"/>
    <property type="match status" value="1"/>
</dbReference>
<dbReference type="PRINTS" id="PR00061">
    <property type="entry name" value="RIBOSOMALL19"/>
</dbReference>
<dbReference type="SUPFAM" id="SSF50104">
    <property type="entry name" value="Translation proteins SH3-like domain"/>
    <property type="match status" value="1"/>
</dbReference>
<dbReference type="PROSITE" id="PS01015">
    <property type="entry name" value="RIBOSOMAL_L19"/>
    <property type="match status" value="1"/>
</dbReference>
<reference key="1">
    <citation type="journal article" date="2008" name="J. Bacteriol.">
        <title>Genome sequence of the streptomycin-producing microorganism Streptomyces griseus IFO 13350.</title>
        <authorList>
            <person name="Ohnishi Y."/>
            <person name="Ishikawa J."/>
            <person name="Hara H."/>
            <person name="Suzuki H."/>
            <person name="Ikenoya M."/>
            <person name="Ikeda H."/>
            <person name="Yamashita A."/>
            <person name="Hattori M."/>
            <person name="Horinouchi S."/>
        </authorList>
    </citation>
    <scope>NUCLEOTIDE SEQUENCE [LARGE SCALE GENOMIC DNA]</scope>
    <source>
        <strain>JCM 4626 / CBS 651.72 / NBRC 13350 / KCC S-0626 / ISP 5235</strain>
    </source>
</reference>
<feature type="chain" id="PRO_1000193903" description="Large ribosomal subunit protein bL19">
    <location>
        <begin position="1"/>
        <end position="116"/>
    </location>
</feature>
<name>RL19_STRGG</name>
<comment type="function">
    <text evidence="1">This protein is located at the 30S-50S ribosomal subunit interface and may play a role in the structure and function of the aminoacyl-tRNA binding site.</text>
</comment>
<comment type="similarity">
    <text evidence="1">Belongs to the bacterial ribosomal protein bL19 family.</text>
</comment>
<gene>
    <name evidence="1" type="primary">rplS</name>
    <name type="ordered locus">SGR_1885</name>
</gene>
<organism>
    <name type="scientific">Streptomyces griseus subsp. griseus (strain JCM 4626 / CBS 651.72 / NBRC 13350 / KCC S-0626 / ISP 5235)</name>
    <dbReference type="NCBI Taxonomy" id="455632"/>
    <lineage>
        <taxon>Bacteria</taxon>
        <taxon>Bacillati</taxon>
        <taxon>Actinomycetota</taxon>
        <taxon>Actinomycetes</taxon>
        <taxon>Kitasatosporales</taxon>
        <taxon>Streptomycetaceae</taxon>
        <taxon>Streptomyces</taxon>
    </lineage>
</organism>
<keyword id="KW-0687">Ribonucleoprotein</keyword>
<keyword id="KW-0689">Ribosomal protein</keyword>
<evidence type="ECO:0000255" key="1">
    <source>
        <dbReference type="HAMAP-Rule" id="MF_00402"/>
    </source>
</evidence>
<evidence type="ECO:0000305" key="2"/>
<accession>B1VYV9</accession>
<protein>
    <recommendedName>
        <fullName evidence="1">Large ribosomal subunit protein bL19</fullName>
    </recommendedName>
    <alternativeName>
        <fullName evidence="2">50S ribosomal protein L19</fullName>
    </alternativeName>
</protein>
<sequence>MASLLDGVNAATLRSDVPAFRPGDTVNVHVRVIEGNRSRIQQFKGVVIRRQGSGVSETFTVRKVSFSVGVERTFPVHSPIFEKIELVTRGDVRRAKLYFLRELRGKAAKIKEKRDN</sequence>